<sequence length="195" mass="22380">MKVYLGGEAEVKILENVVVKTRIPKRYRIKELDRELRLRRTKMEAKIISAARRAGVPTPIVLDVEEDTIVMERIYGEAVKDVMSKDVSREVGRMAAKLHRAGIIHGDITPMNLILSNSRIYFVDFGLAFFDNKVEPMGVDVHVYFESLKASFENWERLRDAFIEGYLAEGGSEEVIERAKEIEERGRYVERVSMG</sequence>
<reference key="1">
    <citation type="journal article" date="1997" name="Nature">
        <title>The complete genome sequence of the hyperthermophilic, sulphate-reducing archaeon Archaeoglobus fulgidus.</title>
        <authorList>
            <person name="Klenk H.-P."/>
            <person name="Clayton R.A."/>
            <person name="Tomb J.-F."/>
            <person name="White O."/>
            <person name="Nelson K.E."/>
            <person name="Ketchum K.A."/>
            <person name="Dodson R.J."/>
            <person name="Gwinn M.L."/>
            <person name="Hickey E.K."/>
            <person name="Peterson J.D."/>
            <person name="Richardson D.L."/>
            <person name="Kerlavage A.R."/>
            <person name="Graham D.E."/>
            <person name="Kyrpides N.C."/>
            <person name="Fleischmann R.D."/>
            <person name="Quackenbush J."/>
            <person name="Lee N.H."/>
            <person name="Sutton G.G."/>
            <person name="Gill S.R."/>
            <person name="Kirkness E.F."/>
            <person name="Dougherty B.A."/>
            <person name="McKenney K."/>
            <person name="Adams M.D."/>
            <person name="Loftus B.J."/>
            <person name="Peterson S.N."/>
            <person name="Reich C.I."/>
            <person name="McNeil L.K."/>
            <person name="Badger J.H."/>
            <person name="Glodek A."/>
            <person name="Zhou L."/>
            <person name="Overbeek R."/>
            <person name="Gocayne J.D."/>
            <person name="Weidman J.F."/>
            <person name="McDonald L.A."/>
            <person name="Utterback T.R."/>
            <person name="Cotton M.D."/>
            <person name="Spriggs T."/>
            <person name="Artiach P."/>
            <person name="Kaine B.P."/>
            <person name="Sykes S.M."/>
            <person name="Sadow P.W."/>
            <person name="D'Andrea K.P."/>
            <person name="Bowman C."/>
            <person name="Fujii C."/>
            <person name="Garland S.A."/>
            <person name="Mason T.M."/>
            <person name="Olsen G.J."/>
            <person name="Fraser C.M."/>
            <person name="Smith H.O."/>
            <person name="Woese C.R."/>
            <person name="Venter J.C."/>
        </authorList>
    </citation>
    <scope>NUCLEOTIDE SEQUENCE [LARGE SCALE GENOMIC DNA]</scope>
    <source>
        <strain>ATCC 49558 / DSM 4304 / JCM 9628 / NBRC 100126 / VC-16</strain>
    </source>
</reference>
<organism>
    <name type="scientific">Archaeoglobus fulgidus (strain ATCC 49558 / DSM 4304 / JCM 9628 / NBRC 100126 / VC-16)</name>
    <dbReference type="NCBI Taxonomy" id="224325"/>
    <lineage>
        <taxon>Archaea</taxon>
        <taxon>Methanobacteriati</taxon>
        <taxon>Methanobacteriota</taxon>
        <taxon>Archaeoglobi</taxon>
        <taxon>Archaeoglobales</taxon>
        <taxon>Archaeoglobaceae</taxon>
        <taxon>Archaeoglobus</taxon>
    </lineage>
</organism>
<comment type="function">
    <text evidence="1">Could be involved in the formation of a threonylcarbamoyl group on adenosine at position 37 (t(6)A37) in tRNAs that read codons beginning with adenine.</text>
</comment>
<comment type="catalytic activity">
    <reaction evidence="1">
        <text>L-seryl-[protein] + ATP = O-phospho-L-seryl-[protein] + ADP + H(+)</text>
        <dbReference type="Rhea" id="RHEA:17989"/>
        <dbReference type="Rhea" id="RHEA-COMP:9863"/>
        <dbReference type="Rhea" id="RHEA-COMP:11604"/>
        <dbReference type="ChEBI" id="CHEBI:15378"/>
        <dbReference type="ChEBI" id="CHEBI:29999"/>
        <dbReference type="ChEBI" id="CHEBI:30616"/>
        <dbReference type="ChEBI" id="CHEBI:83421"/>
        <dbReference type="ChEBI" id="CHEBI:456216"/>
        <dbReference type="EC" id="2.7.11.1"/>
    </reaction>
</comment>
<comment type="catalytic activity">
    <reaction evidence="1">
        <text>L-threonyl-[protein] + ATP = O-phospho-L-threonyl-[protein] + ADP + H(+)</text>
        <dbReference type="Rhea" id="RHEA:46608"/>
        <dbReference type="Rhea" id="RHEA-COMP:11060"/>
        <dbReference type="Rhea" id="RHEA-COMP:11605"/>
        <dbReference type="ChEBI" id="CHEBI:15378"/>
        <dbReference type="ChEBI" id="CHEBI:30013"/>
        <dbReference type="ChEBI" id="CHEBI:30616"/>
        <dbReference type="ChEBI" id="CHEBI:61977"/>
        <dbReference type="ChEBI" id="CHEBI:456216"/>
        <dbReference type="EC" id="2.7.11.1"/>
    </reaction>
</comment>
<comment type="subcellular location">
    <subcellularLocation>
        <location evidence="4">Cytoplasm</location>
    </subcellularLocation>
</comment>
<comment type="similarity">
    <text evidence="2">Belongs to the protein kinase superfamily. Tyr protein kinase family. BUD32 subfamily.</text>
</comment>
<gene>
    <name type="ordered locus">AF_0665</name>
</gene>
<accession>O29592</accession>
<evidence type="ECO:0000250" key="1">
    <source>
        <dbReference type="UniProtKB" id="Q9UYB9"/>
    </source>
</evidence>
<evidence type="ECO:0000255" key="2">
    <source>
        <dbReference type="PROSITE-ProRule" id="PRU00159"/>
    </source>
</evidence>
<evidence type="ECO:0000255" key="3">
    <source>
        <dbReference type="PROSITE-ProRule" id="PRU10028"/>
    </source>
</evidence>
<evidence type="ECO:0000305" key="4"/>
<feature type="chain" id="PRO_0000096983" description="Probable serine/threonine-protein kinase BUD32 homolog">
    <location>
        <begin position="1"/>
        <end position="195"/>
    </location>
</feature>
<feature type="domain" description="Protein kinase" evidence="2">
    <location>
        <begin position="1"/>
        <end position="195"/>
    </location>
</feature>
<feature type="active site" description="Proton acceptor" evidence="2 3">
    <location>
        <position position="107"/>
    </location>
</feature>
<feature type="binding site" evidence="2">
    <location>
        <position position="12"/>
    </location>
    <ligand>
        <name>ATP</name>
        <dbReference type="ChEBI" id="CHEBI:30616"/>
    </ligand>
</feature>
<proteinExistence type="inferred from homology"/>
<protein>
    <recommendedName>
        <fullName>Probable serine/threonine-protein kinase BUD32 homolog</fullName>
        <ecNumber evidence="1">2.7.11.1</ecNumber>
    </recommendedName>
</protein>
<keyword id="KW-0067">ATP-binding</keyword>
<keyword id="KW-0963">Cytoplasm</keyword>
<keyword id="KW-0418">Kinase</keyword>
<keyword id="KW-0547">Nucleotide-binding</keyword>
<keyword id="KW-1185">Reference proteome</keyword>
<keyword id="KW-0723">Serine/threonine-protein kinase</keyword>
<keyword id="KW-0808">Transferase</keyword>
<keyword id="KW-0819">tRNA processing</keyword>
<name>BUD32_ARCFU</name>
<dbReference type="EC" id="2.7.11.1" evidence="1"/>
<dbReference type="EMBL" id="AE000782">
    <property type="protein sequence ID" value="AAB90576.1"/>
    <property type="molecule type" value="Genomic_DNA"/>
</dbReference>
<dbReference type="PIR" id="A69333">
    <property type="entry name" value="A69333"/>
</dbReference>
<dbReference type="RefSeq" id="WP_010878168.1">
    <property type="nucleotide sequence ID" value="NC_000917.1"/>
</dbReference>
<dbReference type="SMR" id="O29592"/>
<dbReference type="STRING" id="224325.AF_0665"/>
<dbReference type="PaxDb" id="224325-AF_0665"/>
<dbReference type="EnsemblBacteria" id="AAB90576">
    <property type="protein sequence ID" value="AAB90576"/>
    <property type="gene ID" value="AF_0665"/>
</dbReference>
<dbReference type="KEGG" id="afu:AF_0665"/>
<dbReference type="eggNOG" id="arCOG01185">
    <property type="taxonomic scope" value="Archaea"/>
</dbReference>
<dbReference type="HOGENOM" id="CLU_063953_2_0_2"/>
<dbReference type="OrthoDB" id="31344at2157"/>
<dbReference type="PhylomeDB" id="O29592"/>
<dbReference type="Proteomes" id="UP000002199">
    <property type="component" value="Chromosome"/>
</dbReference>
<dbReference type="GO" id="GO:0005829">
    <property type="term" value="C:cytosol"/>
    <property type="evidence" value="ECO:0007669"/>
    <property type="project" value="TreeGrafter"/>
</dbReference>
<dbReference type="GO" id="GO:0005524">
    <property type="term" value="F:ATP binding"/>
    <property type="evidence" value="ECO:0007669"/>
    <property type="project" value="UniProtKB-KW"/>
</dbReference>
<dbReference type="GO" id="GO:0106310">
    <property type="term" value="F:protein serine kinase activity"/>
    <property type="evidence" value="ECO:0007669"/>
    <property type="project" value="RHEA"/>
</dbReference>
<dbReference type="GO" id="GO:0004674">
    <property type="term" value="F:protein serine/threonine kinase activity"/>
    <property type="evidence" value="ECO:0007669"/>
    <property type="project" value="UniProtKB-KW"/>
</dbReference>
<dbReference type="GO" id="GO:0008033">
    <property type="term" value="P:tRNA processing"/>
    <property type="evidence" value="ECO:0007669"/>
    <property type="project" value="UniProtKB-KW"/>
</dbReference>
<dbReference type="Gene3D" id="3.30.200.20">
    <property type="entry name" value="Phosphorylase Kinase, domain 1"/>
    <property type="match status" value="1"/>
</dbReference>
<dbReference type="Gene3D" id="1.10.510.10">
    <property type="entry name" value="Transferase(Phosphotransferase) domain 1"/>
    <property type="match status" value="1"/>
</dbReference>
<dbReference type="InterPro" id="IPR022495">
    <property type="entry name" value="Bud32"/>
</dbReference>
<dbReference type="InterPro" id="IPR011009">
    <property type="entry name" value="Kinase-like_dom_sf"/>
</dbReference>
<dbReference type="InterPro" id="IPR000719">
    <property type="entry name" value="Prot_kinase_dom"/>
</dbReference>
<dbReference type="InterPro" id="IPR018934">
    <property type="entry name" value="RIO_dom"/>
</dbReference>
<dbReference type="InterPro" id="IPR008266">
    <property type="entry name" value="Tyr_kinase_AS"/>
</dbReference>
<dbReference type="NCBIfam" id="TIGR03724">
    <property type="entry name" value="arch_bud32"/>
    <property type="match status" value="1"/>
</dbReference>
<dbReference type="NCBIfam" id="NF011462">
    <property type="entry name" value="PRK14879.1-3"/>
    <property type="match status" value="1"/>
</dbReference>
<dbReference type="PANTHER" id="PTHR12209:SF0">
    <property type="entry name" value="EKC_KEOPS COMPLEX SUBUNIT TP53RK"/>
    <property type="match status" value="1"/>
</dbReference>
<dbReference type="PANTHER" id="PTHR12209">
    <property type="entry name" value="NON-SPECIFIC SERINE/THREONINE PROTEIN KINASE"/>
    <property type="match status" value="1"/>
</dbReference>
<dbReference type="Pfam" id="PF01163">
    <property type="entry name" value="RIO1"/>
    <property type="match status" value="1"/>
</dbReference>
<dbReference type="SUPFAM" id="SSF56112">
    <property type="entry name" value="Protein kinase-like (PK-like)"/>
    <property type="match status" value="1"/>
</dbReference>
<dbReference type="PROSITE" id="PS50011">
    <property type="entry name" value="PROTEIN_KINASE_DOM"/>
    <property type="match status" value="1"/>
</dbReference>
<dbReference type="PROSITE" id="PS00109">
    <property type="entry name" value="PROTEIN_KINASE_TYR"/>
    <property type="match status" value="1"/>
</dbReference>